<comment type="function">
    <text evidence="1">Catalyzes the condensation of the acetyl group of acetyl-CoA with 3-methyl-2-oxobutanoate (2-ketoisovalerate) to form 3-carboxy-3-hydroxy-4-methylpentanoate (2-isopropylmalate).</text>
</comment>
<comment type="catalytic activity">
    <reaction evidence="1">
        <text>3-methyl-2-oxobutanoate + acetyl-CoA + H2O = (2S)-2-isopropylmalate + CoA + H(+)</text>
        <dbReference type="Rhea" id="RHEA:21524"/>
        <dbReference type="ChEBI" id="CHEBI:1178"/>
        <dbReference type="ChEBI" id="CHEBI:11851"/>
        <dbReference type="ChEBI" id="CHEBI:15377"/>
        <dbReference type="ChEBI" id="CHEBI:15378"/>
        <dbReference type="ChEBI" id="CHEBI:57287"/>
        <dbReference type="ChEBI" id="CHEBI:57288"/>
        <dbReference type="EC" id="2.3.3.13"/>
    </reaction>
</comment>
<comment type="cofactor">
    <cofactor evidence="1">
        <name>Mn(2+)</name>
        <dbReference type="ChEBI" id="CHEBI:29035"/>
    </cofactor>
</comment>
<comment type="pathway">
    <text evidence="1">Amino-acid biosynthesis; L-leucine biosynthesis; L-leucine from 3-methyl-2-oxobutanoate: step 1/4.</text>
</comment>
<comment type="subunit">
    <text evidence="1">Homodimer.</text>
</comment>
<comment type="subcellular location">
    <subcellularLocation>
        <location evidence="1">Cytoplasm</location>
    </subcellularLocation>
</comment>
<comment type="similarity">
    <text evidence="1">Belongs to the alpha-IPM synthase/homocitrate synthase family. LeuA type 1 subfamily.</text>
</comment>
<feature type="chain" id="PRO_1000149198" description="2-isopropylmalate synthase">
    <location>
        <begin position="1"/>
        <end position="523"/>
    </location>
</feature>
<feature type="domain" description="Pyruvate carboxyltransferase" evidence="1">
    <location>
        <begin position="5"/>
        <end position="267"/>
    </location>
</feature>
<feature type="region of interest" description="Regulatory domain" evidence="1">
    <location>
        <begin position="392"/>
        <end position="523"/>
    </location>
</feature>
<feature type="binding site" evidence="1">
    <location>
        <position position="14"/>
    </location>
    <ligand>
        <name>Mn(2+)</name>
        <dbReference type="ChEBI" id="CHEBI:29035"/>
    </ligand>
</feature>
<feature type="binding site" evidence="1">
    <location>
        <position position="202"/>
    </location>
    <ligand>
        <name>Mn(2+)</name>
        <dbReference type="ChEBI" id="CHEBI:29035"/>
    </ligand>
</feature>
<feature type="binding site" evidence="1">
    <location>
        <position position="204"/>
    </location>
    <ligand>
        <name>Mn(2+)</name>
        <dbReference type="ChEBI" id="CHEBI:29035"/>
    </ligand>
</feature>
<feature type="binding site" evidence="1">
    <location>
        <position position="238"/>
    </location>
    <ligand>
        <name>Mn(2+)</name>
        <dbReference type="ChEBI" id="CHEBI:29035"/>
    </ligand>
</feature>
<gene>
    <name evidence="1" type="primary">leuA</name>
    <name type="ordered locus">Ent638_0622</name>
</gene>
<evidence type="ECO:0000255" key="1">
    <source>
        <dbReference type="HAMAP-Rule" id="MF_01025"/>
    </source>
</evidence>
<sequence length="523" mass="57528">MSQQVVIFDTTLRDGEQALQASLSVKEKLQIALALERMGVDVMEVGFPVSSPGDFESVQTIARTIKNSRVCALARCVEKDIDVAAESLKVAEAFRIHTFIATSPMHIATKLRSTLDEVIERAVYMIKRARHYTDDVEFSCEDAGRTPIADLARVVEAAINAGAKTINIPDTVGYTMPFEFSNIITGLYERVPNIDQAIISVHTHDDLGLAVGNAIAAVHAGARQVEGAMNGIGERAGNCSLEEVIMAIKVRKDIMNVQTRINHNEIWRTSQTVSQICNMPIPANKAIVGTGAFAHSSGIHQDGVLKNRENYEIMTPESIGLNQVQLNLTSRSGRAAVKHRMEEMGYKETDYNMDHLYDAFLKLADKKGQVFDYDLEAIAFINKQQEEPEHFRMDYFSVQSGSSDIATASVKLACGDEIKAEAANGNGPVDAIYQAINRVTGYDVELVKYDLSAKGHGKDALGQVDIVVTYNGRRFHGVGLATDIVESSAKAMVHVLNNIWRAAEVEKELQRKAQNKENNKETV</sequence>
<organism>
    <name type="scientific">Enterobacter sp. (strain 638)</name>
    <dbReference type="NCBI Taxonomy" id="399742"/>
    <lineage>
        <taxon>Bacteria</taxon>
        <taxon>Pseudomonadati</taxon>
        <taxon>Pseudomonadota</taxon>
        <taxon>Gammaproteobacteria</taxon>
        <taxon>Enterobacterales</taxon>
        <taxon>Enterobacteriaceae</taxon>
        <taxon>Enterobacter</taxon>
    </lineage>
</organism>
<dbReference type="EC" id="2.3.3.13" evidence="1"/>
<dbReference type="EMBL" id="CP000653">
    <property type="protein sequence ID" value="ABP59309.1"/>
    <property type="molecule type" value="Genomic_DNA"/>
</dbReference>
<dbReference type="RefSeq" id="WP_012016031.1">
    <property type="nucleotide sequence ID" value="NC_009436.1"/>
</dbReference>
<dbReference type="SMR" id="A4W6H9"/>
<dbReference type="STRING" id="399742.Ent638_0622"/>
<dbReference type="KEGG" id="ent:Ent638_0622"/>
<dbReference type="eggNOG" id="COG0119">
    <property type="taxonomic scope" value="Bacteria"/>
</dbReference>
<dbReference type="HOGENOM" id="CLU_022158_0_1_6"/>
<dbReference type="OrthoDB" id="9803573at2"/>
<dbReference type="UniPathway" id="UPA00048">
    <property type="reaction ID" value="UER00070"/>
</dbReference>
<dbReference type="Proteomes" id="UP000000230">
    <property type="component" value="Chromosome"/>
</dbReference>
<dbReference type="GO" id="GO:0005829">
    <property type="term" value="C:cytosol"/>
    <property type="evidence" value="ECO:0007669"/>
    <property type="project" value="TreeGrafter"/>
</dbReference>
<dbReference type="GO" id="GO:0003852">
    <property type="term" value="F:2-isopropylmalate synthase activity"/>
    <property type="evidence" value="ECO:0007669"/>
    <property type="project" value="UniProtKB-UniRule"/>
</dbReference>
<dbReference type="GO" id="GO:0003985">
    <property type="term" value="F:acetyl-CoA C-acetyltransferase activity"/>
    <property type="evidence" value="ECO:0007669"/>
    <property type="project" value="UniProtKB-UniRule"/>
</dbReference>
<dbReference type="GO" id="GO:0030145">
    <property type="term" value="F:manganese ion binding"/>
    <property type="evidence" value="ECO:0007669"/>
    <property type="project" value="UniProtKB-UniRule"/>
</dbReference>
<dbReference type="GO" id="GO:0009098">
    <property type="term" value="P:L-leucine biosynthetic process"/>
    <property type="evidence" value="ECO:0007669"/>
    <property type="project" value="UniProtKB-UniRule"/>
</dbReference>
<dbReference type="CDD" id="cd07940">
    <property type="entry name" value="DRE_TIM_IPMS"/>
    <property type="match status" value="1"/>
</dbReference>
<dbReference type="FunFam" id="1.10.238.260:FF:000001">
    <property type="entry name" value="2-isopropylmalate synthase"/>
    <property type="match status" value="1"/>
</dbReference>
<dbReference type="FunFam" id="3.20.20.70:FF:000010">
    <property type="entry name" value="2-isopropylmalate synthase"/>
    <property type="match status" value="1"/>
</dbReference>
<dbReference type="FunFam" id="3.30.160.270:FF:000001">
    <property type="entry name" value="2-isopropylmalate synthase"/>
    <property type="match status" value="1"/>
</dbReference>
<dbReference type="Gene3D" id="1.10.238.260">
    <property type="match status" value="1"/>
</dbReference>
<dbReference type="Gene3D" id="3.30.160.270">
    <property type="match status" value="1"/>
</dbReference>
<dbReference type="Gene3D" id="3.20.20.70">
    <property type="entry name" value="Aldolase class I"/>
    <property type="match status" value="1"/>
</dbReference>
<dbReference type="HAMAP" id="MF_01025">
    <property type="entry name" value="LeuA_type1"/>
    <property type="match status" value="1"/>
</dbReference>
<dbReference type="InterPro" id="IPR050073">
    <property type="entry name" value="2-IPM_HCS-like"/>
</dbReference>
<dbReference type="InterPro" id="IPR013709">
    <property type="entry name" value="2-isopropylmalate_synth_dimer"/>
</dbReference>
<dbReference type="InterPro" id="IPR002034">
    <property type="entry name" value="AIPM/Hcit_synth_CS"/>
</dbReference>
<dbReference type="InterPro" id="IPR013785">
    <property type="entry name" value="Aldolase_TIM"/>
</dbReference>
<dbReference type="InterPro" id="IPR054691">
    <property type="entry name" value="LeuA/HCS_post-cat"/>
</dbReference>
<dbReference type="InterPro" id="IPR036230">
    <property type="entry name" value="LeuA_allosteric_dom_sf"/>
</dbReference>
<dbReference type="InterPro" id="IPR005671">
    <property type="entry name" value="LeuA_bact_synth"/>
</dbReference>
<dbReference type="InterPro" id="IPR000891">
    <property type="entry name" value="PYR_CT"/>
</dbReference>
<dbReference type="NCBIfam" id="TIGR00973">
    <property type="entry name" value="leuA_bact"/>
    <property type="match status" value="1"/>
</dbReference>
<dbReference type="NCBIfam" id="NF002084">
    <property type="entry name" value="PRK00915.1-1"/>
    <property type="match status" value="1"/>
</dbReference>
<dbReference type="NCBIfam" id="NF002086">
    <property type="entry name" value="PRK00915.1-3"/>
    <property type="match status" value="1"/>
</dbReference>
<dbReference type="PANTHER" id="PTHR10277:SF9">
    <property type="entry name" value="2-ISOPROPYLMALATE SYNTHASE 1, CHLOROPLASTIC-RELATED"/>
    <property type="match status" value="1"/>
</dbReference>
<dbReference type="PANTHER" id="PTHR10277">
    <property type="entry name" value="HOMOCITRATE SYNTHASE-RELATED"/>
    <property type="match status" value="1"/>
</dbReference>
<dbReference type="Pfam" id="PF22617">
    <property type="entry name" value="HCS_D2"/>
    <property type="match status" value="1"/>
</dbReference>
<dbReference type="Pfam" id="PF00682">
    <property type="entry name" value="HMGL-like"/>
    <property type="match status" value="1"/>
</dbReference>
<dbReference type="Pfam" id="PF08502">
    <property type="entry name" value="LeuA_dimer"/>
    <property type="match status" value="1"/>
</dbReference>
<dbReference type="SMART" id="SM00917">
    <property type="entry name" value="LeuA_dimer"/>
    <property type="match status" value="1"/>
</dbReference>
<dbReference type="SUPFAM" id="SSF110921">
    <property type="entry name" value="2-isopropylmalate synthase LeuA, allosteric (dimerisation) domain"/>
    <property type="match status" value="1"/>
</dbReference>
<dbReference type="SUPFAM" id="SSF51569">
    <property type="entry name" value="Aldolase"/>
    <property type="match status" value="1"/>
</dbReference>
<dbReference type="PROSITE" id="PS00815">
    <property type="entry name" value="AIPM_HOMOCIT_SYNTH_1"/>
    <property type="match status" value="1"/>
</dbReference>
<dbReference type="PROSITE" id="PS00816">
    <property type="entry name" value="AIPM_HOMOCIT_SYNTH_2"/>
    <property type="match status" value="1"/>
</dbReference>
<dbReference type="PROSITE" id="PS50991">
    <property type="entry name" value="PYR_CT"/>
    <property type="match status" value="1"/>
</dbReference>
<reference key="1">
    <citation type="journal article" date="2010" name="PLoS Genet.">
        <title>Genome sequence of the plant growth promoting endophytic bacterium Enterobacter sp. 638.</title>
        <authorList>
            <person name="Taghavi S."/>
            <person name="van der Lelie D."/>
            <person name="Hoffman A."/>
            <person name="Zhang Y.B."/>
            <person name="Walla M.D."/>
            <person name="Vangronsveld J."/>
            <person name="Newman L."/>
            <person name="Monchy S."/>
        </authorList>
    </citation>
    <scope>NUCLEOTIDE SEQUENCE [LARGE SCALE GENOMIC DNA]</scope>
    <source>
        <strain>638</strain>
    </source>
</reference>
<name>LEU1_ENT38</name>
<accession>A4W6H9</accession>
<keyword id="KW-0028">Amino-acid biosynthesis</keyword>
<keyword id="KW-0100">Branched-chain amino acid biosynthesis</keyword>
<keyword id="KW-0963">Cytoplasm</keyword>
<keyword id="KW-0432">Leucine biosynthesis</keyword>
<keyword id="KW-0464">Manganese</keyword>
<keyword id="KW-0479">Metal-binding</keyword>
<keyword id="KW-0808">Transferase</keyword>
<proteinExistence type="inferred from homology"/>
<protein>
    <recommendedName>
        <fullName evidence="1">2-isopropylmalate synthase</fullName>
        <ecNumber evidence="1">2.3.3.13</ecNumber>
    </recommendedName>
    <alternativeName>
        <fullName evidence="1">Alpha-IPM synthase</fullName>
    </alternativeName>
    <alternativeName>
        <fullName evidence="1">Alpha-isopropylmalate synthase</fullName>
    </alternativeName>
</protein>